<comment type="function">
    <text evidence="1">Catalyzes the condensation of carbamoyl phosphate and aspartate to form carbamoyl aspartate and inorganic phosphate, the committed step in the de novo pyrimidine nucleotide biosynthesis pathway.</text>
</comment>
<comment type="catalytic activity">
    <reaction evidence="1">
        <text>carbamoyl phosphate + L-aspartate = N-carbamoyl-L-aspartate + phosphate + H(+)</text>
        <dbReference type="Rhea" id="RHEA:20013"/>
        <dbReference type="ChEBI" id="CHEBI:15378"/>
        <dbReference type="ChEBI" id="CHEBI:29991"/>
        <dbReference type="ChEBI" id="CHEBI:32814"/>
        <dbReference type="ChEBI" id="CHEBI:43474"/>
        <dbReference type="ChEBI" id="CHEBI:58228"/>
        <dbReference type="EC" id="2.1.3.2"/>
    </reaction>
</comment>
<comment type="pathway">
    <text evidence="1">Pyrimidine metabolism; UMP biosynthesis via de novo pathway; (S)-dihydroorotate from bicarbonate: step 2/3.</text>
</comment>
<comment type="subunit">
    <text evidence="1">Heterododecamer (2C3:3R2) of six catalytic PyrB chains organized as two trimers (C3), and six regulatory PyrI chains organized as three dimers (R2).</text>
</comment>
<comment type="similarity">
    <text evidence="1">Belongs to the aspartate/ornithine carbamoyltransferase superfamily. ATCase family.</text>
</comment>
<organism>
    <name type="scientific">Streptococcus thermophilus (strain ATCC BAA-250 / LMG 18311)</name>
    <dbReference type="NCBI Taxonomy" id="264199"/>
    <lineage>
        <taxon>Bacteria</taxon>
        <taxon>Bacillati</taxon>
        <taxon>Bacillota</taxon>
        <taxon>Bacilli</taxon>
        <taxon>Lactobacillales</taxon>
        <taxon>Streptococcaceae</taxon>
        <taxon>Streptococcus</taxon>
    </lineage>
</organism>
<feature type="chain" id="PRO_0000113213" description="Aspartate carbamoyltransferase catalytic subunit">
    <location>
        <begin position="1"/>
        <end position="308"/>
    </location>
</feature>
<feature type="binding site" evidence="1">
    <location>
        <position position="59"/>
    </location>
    <ligand>
        <name>carbamoyl phosphate</name>
        <dbReference type="ChEBI" id="CHEBI:58228"/>
    </ligand>
</feature>
<feature type="binding site" evidence="1">
    <location>
        <position position="60"/>
    </location>
    <ligand>
        <name>carbamoyl phosphate</name>
        <dbReference type="ChEBI" id="CHEBI:58228"/>
    </ligand>
</feature>
<feature type="binding site" evidence="1">
    <location>
        <position position="87"/>
    </location>
    <ligand>
        <name>L-aspartate</name>
        <dbReference type="ChEBI" id="CHEBI:29991"/>
    </ligand>
</feature>
<feature type="binding site" evidence="1">
    <location>
        <position position="109"/>
    </location>
    <ligand>
        <name>carbamoyl phosphate</name>
        <dbReference type="ChEBI" id="CHEBI:58228"/>
    </ligand>
</feature>
<feature type="binding site" evidence="1">
    <location>
        <position position="139"/>
    </location>
    <ligand>
        <name>carbamoyl phosphate</name>
        <dbReference type="ChEBI" id="CHEBI:58228"/>
    </ligand>
</feature>
<feature type="binding site" evidence="1">
    <location>
        <position position="142"/>
    </location>
    <ligand>
        <name>carbamoyl phosphate</name>
        <dbReference type="ChEBI" id="CHEBI:58228"/>
    </ligand>
</feature>
<feature type="binding site" evidence="1">
    <location>
        <position position="172"/>
    </location>
    <ligand>
        <name>L-aspartate</name>
        <dbReference type="ChEBI" id="CHEBI:29991"/>
    </ligand>
</feature>
<feature type="binding site" evidence="1">
    <location>
        <position position="224"/>
    </location>
    <ligand>
        <name>L-aspartate</name>
        <dbReference type="ChEBI" id="CHEBI:29991"/>
    </ligand>
</feature>
<feature type="binding site" evidence="1">
    <location>
        <position position="265"/>
    </location>
    <ligand>
        <name>carbamoyl phosphate</name>
        <dbReference type="ChEBI" id="CHEBI:58228"/>
    </ligand>
</feature>
<feature type="binding site" evidence="1">
    <location>
        <position position="266"/>
    </location>
    <ligand>
        <name>carbamoyl phosphate</name>
        <dbReference type="ChEBI" id="CHEBI:58228"/>
    </ligand>
</feature>
<protein>
    <recommendedName>
        <fullName evidence="1">Aspartate carbamoyltransferase catalytic subunit</fullName>
        <ecNumber evidence="1">2.1.3.2</ecNumber>
    </recommendedName>
    <alternativeName>
        <fullName evidence="1">Aspartate transcarbamylase</fullName>
        <shortName evidence="1">ATCase</shortName>
    </alternativeName>
</protein>
<dbReference type="EC" id="2.1.3.2" evidence="1"/>
<dbReference type="EMBL" id="CP000023">
    <property type="protein sequence ID" value="AAV60233.1"/>
    <property type="molecule type" value="Genomic_DNA"/>
</dbReference>
<dbReference type="RefSeq" id="WP_002947266.1">
    <property type="nucleotide sequence ID" value="NC_006448.1"/>
</dbReference>
<dbReference type="SMR" id="Q5M5F8"/>
<dbReference type="STRING" id="264199.stu0525"/>
<dbReference type="KEGG" id="stl:stu0525"/>
<dbReference type="eggNOG" id="COG0540">
    <property type="taxonomic scope" value="Bacteria"/>
</dbReference>
<dbReference type="HOGENOM" id="CLU_043846_2_1_9"/>
<dbReference type="UniPathway" id="UPA00070">
    <property type="reaction ID" value="UER00116"/>
</dbReference>
<dbReference type="Proteomes" id="UP000001170">
    <property type="component" value="Chromosome"/>
</dbReference>
<dbReference type="GO" id="GO:0005829">
    <property type="term" value="C:cytosol"/>
    <property type="evidence" value="ECO:0007669"/>
    <property type="project" value="TreeGrafter"/>
</dbReference>
<dbReference type="GO" id="GO:0016597">
    <property type="term" value="F:amino acid binding"/>
    <property type="evidence" value="ECO:0007669"/>
    <property type="project" value="InterPro"/>
</dbReference>
<dbReference type="GO" id="GO:0004070">
    <property type="term" value="F:aspartate carbamoyltransferase activity"/>
    <property type="evidence" value="ECO:0007669"/>
    <property type="project" value="UniProtKB-UniRule"/>
</dbReference>
<dbReference type="GO" id="GO:0006207">
    <property type="term" value="P:'de novo' pyrimidine nucleobase biosynthetic process"/>
    <property type="evidence" value="ECO:0007669"/>
    <property type="project" value="InterPro"/>
</dbReference>
<dbReference type="GO" id="GO:0044205">
    <property type="term" value="P:'de novo' UMP biosynthetic process"/>
    <property type="evidence" value="ECO:0007669"/>
    <property type="project" value="UniProtKB-UniRule"/>
</dbReference>
<dbReference type="GO" id="GO:0006520">
    <property type="term" value="P:amino acid metabolic process"/>
    <property type="evidence" value="ECO:0007669"/>
    <property type="project" value="InterPro"/>
</dbReference>
<dbReference type="FunFam" id="3.40.50.1370:FF:000011">
    <property type="entry name" value="Aspartate carbamoyltransferase"/>
    <property type="match status" value="1"/>
</dbReference>
<dbReference type="Gene3D" id="3.40.50.1370">
    <property type="entry name" value="Aspartate/ornithine carbamoyltransferase"/>
    <property type="match status" value="2"/>
</dbReference>
<dbReference type="HAMAP" id="MF_00001">
    <property type="entry name" value="Asp_carb_tr"/>
    <property type="match status" value="1"/>
</dbReference>
<dbReference type="InterPro" id="IPR006132">
    <property type="entry name" value="Asp/Orn_carbamoyltranf_P-bd"/>
</dbReference>
<dbReference type="InterPro" id="IPR006130">
    <property type="entry name" value="Asp/Orn_carbamoylTrfase"/>
</dbReference>
<dbReference type="InterPro" id="IPR036901">
    <property type="entry name" value="Asp/Orn_carbamoylTrfase_sf"/>
</dbReference>
<dbReference type="InterPro" id="IPR002082">
    <property type="entry name" value="Asp_carbamoyltransf"/>
</dbReference>
<dbReference type="InterPro" id="IPR006131">
    <property type="entry name" value="Asp_carbamoyltransf_Asp/Orn-bd"/>
</dbReference>
<dbReference type="NCBIfam" id="TIGR00670">
    <property type="entry name" value="asp_carb_tr"/>
    <property type="match status" value="1"/>
</dbReference>
<dbReference type="NCBIfam" id="NF002032">
    <property type="entry name" value="PRK00856.1"/>
    <property type="match status" value="1"/>
</dbReference>
<dbReference type="PANTHER" id="PTHR45753:SF6">
    <property type="entry name" value="ASPARTATE CARBAMOYLTRANSFERASE"/>
    <property type="match status" value="1"/>
</dbReference>
<dbReference type="PANTHER" id="PTHR45753">
    <property type="entry name" value="ORNITHINE CARBAMOYLTRANSFERASE, MITOCHONDRIAL"/>
    <property type="match status" value="1"/>
</dbReference>
<dbReference type="Pfam" id="PF00185">
    <property type="entry name" value="OTCace"/>
    <property type="match status" value="1"/>
</dbReference>
<dbReference type="Pfam" id="PF02729">
    <property type="entry name" value="OTCace_N"/>
    <property type="match status" value="1"/>
</dbReference>
<dbReference type="PRINTS" id="PR00100">
    <property type="entry name" value="AOTCASE"/>
</dbReference>
<dbReference type="PRINTS" id="PR00101">
    <property type="entry name" value="ATCASE"/>
</dbReference>
<dbReference type="SUPFAM" id="SSF53671">
    <property type="entry name" value="Aspartate/ornithine carbamoyltransferase"/>
    <property type="match status" value="1"/>
</dbReference>
<dbReference type="PROSITE" id="PS00097">
    <property type="entry name" value="CARBAMOYLTRANSFERASE"/>
    <property type="match status" value="1"/>
</dbReference>
<evidence type="ECO:0000255" key="1">
    <source>
        <dbReference type="HAMAP-Rule" id="MF_00001"/>
    </source>
</evidence>
<gene>
    <name evidence="1" type="primary">pyrB</name>
    <name type="ordered locus">stu0525</name>
</gene>
<proteinExistence type="inferred from homology"/>
<accession>Q5M5F8</accession>
<sequence>MAIADGKVSLKHLVTMETLTNEEVLGMIRRGGDFKNGRADFQLDRQYFAANLFFENSTRTHKSFEVAEKKLGLDVIEFDAGTSSVNKGETLYDTILTMSALGVDICVVRHSEVDYYKQLIDSRTIQTSIVNGGDGSGQHPSQCLLDLMTIYEEFGTFGNLKICIAGDITHSRVAKSNMRILKRLGAQIYFAGPTEWYSSEFDVYGQHVAIDDVIEDLNVLMLLRVQHERHRNDKGFSKEEYHTLYGLTEERYAKLADQAIIMHPAPVNRDVEIADSLVEAPKARIVTQMQNGVFVRMAIIEAILNGKA</sequence>
<keyword id="KW-0665">Pyrimidine biosynthesis</keyword>
<keyword id="KW-1185">Reference proteome</keyword>
<keyword id="KW-0808">Transferase</keyword>
<reference key="1">
    <citation type="journal article" date="2004" name="Nat. Biotechnol.">
        <title>Complete sequence and comparative genome analysis of the dairy bacterium Streptococcus thermophilus.</title>
        <authorList>
            <person name="Bolotin A."/>
            <person name="Quinquis B."/>
            <person name="Renault P."/>
            <person name="Sorokin A."/>
            <person name="Ehrlich S.D."/>
            <person name="Kulakauskas S."/>
            <person name="Lapidus A."/>
            <person name="Goltsman E."/>
            <person name="Mazur M."/>
            <person name="Pusch G.D."/>
            <person name="Fonstein M."/>
            <person name="Overbeek R."/>
            <person name="Kyprides N."/>
            <person name="Purnelle B."/>
            <person name="Prozzi D."/>
            <person name="Ngui K."/>
            <person name="Masuy D."/>
            <person name="Hancy F."/>
            <person name="Burteau S."/>
            <person name="Boutry M."/>
            <person name="Delcour J."/>
            <person name="Goffeau A."/>
            <person name="Hols P."/>
        </authorList>
    </citation>
    <scope>NUCLEOTIDE SEQUENCE [LARGE SCALE GENOMIC DNA]</scope>
    <source>
        <strain>ATCC BAA-250 / LMG 18311</strain>
    </source>
</reference>
<name>PYRB_STRT2</name>